<feature type="chain" id="PRO_1000194735" description="DNA-directed RNA polymerase subunit Rpo6">
    <location>
        <begin position="1"/>
        <end position="59"/>
    </location>
</feature>
<name>RPO6_HALLT</name>
<dbReference type="EC" id="2.7.7.6" evidence="1"/>
<dbReference type="EMBL" id="CP001365">
    <property type="protein sequence ID" value="ACM57403.1"/>
    <property type="molecule type" value="Genomic_DNA"/>
</dbReference>
<dbReference type="RefSeq" id="WP_004046454.1">
    <property type="nucleotide sequence ID" value="NC_012029.1"/>
</dbReference>
<dbReference type="SMR" id="B9LPW5"/>
<dbReference type="GeneID" id="7400016"/>
<dbReference type="KEGG" id="hla:Hlac_1824"/>
<dbReference type="eggNOG" id="arCOG01268">
    <property type="taxonomic scope" value="Archaea"/>
</dbReference>
<dbReference type="HOGENOM" id="CLU_112527_5_0_2"/>
<dbReference type="Proteomes" id="UP000000740">
    <property type="component" value="Chromosome 1"/>
</dbReference>
<dbReference type="GO" id="GO:0005737">
    <property type="term" value="C:cytoplasm"/>
    <property type="evidence" value="ECO:0007669"/>
    <property type="project" value="UniProtKB-SubCell"/>
</dbReference>
<dbReference type="GO" id="GO:0000428">
    <property type="term" value="C:DNA-directed RNA polymerase complex"/>
    <property type="evidence" value="ECO:0007669"/>
    <property type="project" value="UniProtKB-KW"/>
</dbReference>
<dbReference type="GO" id="GO:0003677">
    <property type="term" value="F:DNA binding"/>
    <property type="evidence" value="ECO:0007669"/>
    <property type="project" value="UniProtKB-UniRule"/>
</dbReference>
<dbReference type="GO" id="GO:0003899">
    <property type="term" value="F:DNA-directed RNA polymerase activity"/>
    <property type="evidence" value="ECO:0007669"/>
    <property type="project" value="UniProtKB-UniRule"/>
</dbReference>
<dbReference type="GO" id="GO:0006360">
    <property type="term" value="P:transcription by RNA polymerase I"/>
    <property type="evidence" value="ECO:0007669"/>
    <property type="project" value="TreeGrafter"/>
</dbReference>
<dbReference type="GO" id="GO:0006366">
    <property type="term" value="P:transcription by RNA polymerase II"/>
    <property type="evidence" value="ECO:0007669"/>
    <property type="project" value="TreeGrafter"/>
</dbReference>
<dbReference type="GO" id="GO:0042797">
    <property type="term" value="P:tRNA transcription by RNA polymerase III"/>
    <property type="evidence" value="ECO:0007669"/>
    <property type="project" value="TreeGrafter"/>
</dbReference>
<dbReference type="Gene3D" id="3.90.940.10">
    <property type="match status" value="1"/>
</dbReference>
<dbReference type="HAMAP" id="MF_00192">
    <property type="entry name" value="RNApol_arch_Rpo6"/>
    <property type="match status" value="1"/>
</dbReference>
<dbReference type="InterPro" id="IPR006110">
    <property type="entry name" value="Pol_omega/Rpo6/RPB6"/>
</dbReference>
<dbReference type="InterPro" id="IPR036161">
    <property type="entry name" value="RPB6/omega-like_sf"/>
</dbReference>
<dbReference type="InterPro" id="IPR006111">
    <property type="entry name" value="Rpo6/Rpb6"/>
</dbReference>
<dbReference type="NCBIfam" id="NF002208">
    <property type="entry name" value="PRK01099.1-3"/>
    <property type="match status" value="1"/>
</dbReference>
<dbReference type="PANTHER" id="PTHR47227">
    <property type="entry name" value="DNA-DIRECTED RNA POLYMERASE SUBUNIT K"/>
    <property type="match status" value="1"/>
</dbReference>
<dbReference type="PANTHER" id="PTHR47227:SF5">
    <property type="entry name" value="DNA-DIRECTED RNA POLYMERASES I, II, AND III SUBUNIT RPABC2"/>
    <property type="match status" value="1"/>
</dbReference>
<dbReference type="Pfam" id="PF01192">
    <property type="entry name" value="RNA_pol_Rpb6"/>
    <property type="match status" value="1"/>
</dbReference>
<dbReference type="PIRSF" id="PIRSF000778">
    <property type="entry name" value="RpoK/RPB6"/>
    <property type="match status" value="1"/>
</dbReference>
<dbReference type="SUPFAM" id="SSF63562">
    <property type="entry name" value="RPB6/omega subunit-like"/>
    <property type="match status" value="1"/>
</dbReference>
<gene>
    <name evidence="1" type="primary">rpo6</name>
    <name evidence="1" type="synonym">rpoK</name>
    <name type="ordered locus">Hlac_1824</name>
</gene>
<reference key="1">
    <citation type="journal article" date="2016" name="Stand. Genomic Sci.">
        <title>Complete genome sequence of the Antarctic Halorubrum lacusprofundi type strain ACAM 34.</title>
        <authorList>
            <person name="Anderson I.J."/>
            <person name="DasSarma P."/>
            <person name="Lucas S."/>
            <person name="Copeland A."/>
            <person name="Lapidus A."/>
            <person name="Del Rio T.G."/>
            <person name="Tice H."/>
            <person name="Dalin E."/>
            <person name="Bruce D.C."/>
            <person name="Goodwin L."/>
            <person name="Pitluck S."/>
            <person name="Sims D."/>
            <person name="Brettin T.S."/>
            <person name="Detter J.C."/>
            <person name="Han C.S."/>
            <person name="Larimer F."/>
            <person name="Hauser L."/>
            <person name="Land M."/>
            <person name="Ivanova N."/>
            <person name="Richardson P."/>
            <person name="Cavicchioli R."/>
            <person name="DasSarma S."/>
            <person name="Woese C.R."/>
            <person name="Kyrpides N.C."/>
        </authorList>
    </citation>
    <scope>NUCLEOTIDE SEQUENCE [LARGE SCALE GENOMIC DNA]</scope>
    <source>
        <strain>ATCC 49239 / DSM 5036 / JCM 8891 / ACAM 34</strain>
    </source>
</reference>
<sequence length="59" mass="6644">MSEQRYNRYEKARILGARALQVSYGAPVLIDTDQTEPILVAAEEYDAGALPFTVRRESN</sequence>
<organism>
    <name type="scientific">Halorubrum lacusprofundi (strain ATCC 49239 / DSM 5036 / JCM 8891 / ACAM 34)</name>
    <dbReference type="NCBI Taxonomy" id="416348"/>
    <lineage>
        <taxon>Archaea</taxon>
        <taxon>Methanobacteriati</taxon>
        <taxon>Methanobacteriota</taxon>
        <taxon>Stenosarchaea group</taxon>
        <taxon>Halobacteria</taxon>
        <taxon>Halobacteriales</taxon>
        <taxon>Haloferacaceae</taxon>
        <taxon>Halorubrum</taxon>
    </lineage>
</organism>
<protein>
    <recommendedName>
        <fullName evidence="1">DNA-directed RNA polymerase subunit Rpo6</fullName>
        <ecNumber evidence="1">2.7.7.6</ecNumber>
    </recommendedName>
    <alternativeName>
        <fullName evidence="1">DNA-directed RNA polymerase subunit K</fullName>
    </alternativeName>
</protein>
<proteinExistence type="inferred from homology"/>
<accession>B9LPW5</accession>
<comment type="function">
    <text evidence="1">DNA-dependent RNA polymerase (RNAP) catalyzes the transcription of DNA into RNA using the four ribonucleoside triphosphates as substrates.</text>
</comment>
<comment type="catalytic activity">
    <reaction evidence="1">
        <text>RNA(n) + a ribonucleoside 5'-triphosphate = RNA(n+1) + diphosphate</text>
        <dbReference type="Rhea" id="RHEA:21248"/>
        <dbReference type="Rhea" id="RHEA-COMP:14527"/>
        <dbReference type="Rhea" id="RHEA-COMP:17342"/>
        <dbReference type="ChEBI" id="CHEBI:33019"/>
        <dbReference type="ChEBI" id="CHEBI:61557"/>
        <dbReference type="ChEBI" id="CHEBI:140395"/>
        <dbReference type="EC" id="2.7.7.6"/>
    </reaction>
</comment>
<comment type="subunit">
    <text evidence="1">Part of the RNA polymerase complex.</text>
</comment>
<comment type="subcellular location">
    <subcellularLocation>
        <location evidence="1">Cytoplasm</location>
    </subcellularLocation>
</comment>
<comment type="similarity">
    <text evidence="1">Belongs to the archaeal Rpo6/eukaryotic RPB6 RNA polymerase subunit family.</text>
</comment>
<keyword id="KW-0963">Cytoplasm</keyword>
<keyword id="KW-0240">DNA-directed RNA polymerase</keyword>
<keyword id="KW-0548">Nucleotidyltransferase</keyword>
<keyword id="KW-1185">Reference proteome</keyword>
<keyword id="KW-0804">Transcription</keyword>
<keyword id="KW-0808">Transferase</keyword>
<evidence type="ECO:0000255" key="1">
    <source>
        <dbReference type="HAMAP-Rule" id="MF_00192"/>
    </source>
</evidence>